<keyword id="KW-0687">Ribonucleoprotein</keyword>
<keyword id="KW-0689">Ribosomal protein</keyword>
<keyword id="KW-0694">RNA-binding</keyword>
<keyword id="KW-0699">rRNA-binding</keyword>
<organism>
    <name type="scientific">Rhizobium johnstonii (strain DSM 114642 / LMG 32736 / 3841)</name>
    <name type="common">Rhizobium leguminosarum bv. viciae</name>
    <dbReference type="NCBI Taxonomy" id="216596"/>
    <lineage>
        <taxon>Bacteria</taxon>
        <taxon>Pseudomonadati</taxon>
        <taxon>Pseudomonadota</taxon>
        <taxon>Alphaproteobacteria</taxon>
        <taxon>Hyphomicrobiales</taxon>
        <taxon>Rhizobiaceae</taxon>
        <taxon>Rhizobium/Agrobacterium group</taxon>
        <taxon>Rhizobium</taxon>
        <taxon>Rhizobium johnstonii</taxon>
    </lineage>
</organism>
<reference key="1">
    <citation type="journal article" date="2006" name="Genome Biol.">
        <title>The genome of Rhizobium leguminosarum has recognizable core and accessory components.</title>
        <authorList>
            <person name="Young J.P.W."/>
            <person name="Crossman L.C."/>
            <person name="Johnston A.W.B."/>
            <person name="Thomson N.R."/>
            <person name="Ghazoui Z.F."/>
            <person name="Hull K.H."/>
            <person name="Wexler M."/>
            <person name="Curson A.R.J."/>
            <person name="Todd J.D."/>
            <person name="Poole P.S."/>
            <person name="Mauchline T.H."/>
            <person name="East A.K."/>
            <person name="Quail M.A."/>
            <person name="Churcher C."/>
            <person name="Arrowsmith C."/>
            <person name="Cherevach I."/>
            <person name="Chillingworth T."/>
            <person name="Clarke K."/>
            <person name="Cronin A."/>
            <person name="Davis P."/>
            <person name="Fraser A."/>
            <person name="Hance Z."/>
            <person name="Hauser H."/>
            <person name="Jagels K."/>
            <person name="Moule S."/>
            <person name="Mungall K."/>
            <person name="Norbertczak H."/>
            <person name="Rabbinowitsch E."/>
            <person name="Sanders M."/>
            <person name="Simmonds M."/>
            <person name="Whitehead S."/>
            <person name="Parkhill J."/>
        </authorList>
    </citation>
    <scope>NUCLEOTIDE SEQUENCE [LARGE SCALE GENOMIC DNA]</scope>
    <source>
        <strain>DSM 114642 / LMG 32736 / 3841</strain>
    </source>
</reference>
<feature type="chain" id="PRO_0000259215" description="Large ribosomal subunit protein bL31">
    <location>
        <begin position="1"/>
        <end position="73"/>
    </location>
</feature>
<dbReference type="EMBL" id="AM236080">
    <property type="protein sequence ID" value="CAK09507.1"/>
    <property type="molecule type" value="Genomic_DNA"/>
</dbReference>
<dbReference type="RefSeq" id="WP_003542805.1">
    <property type="nucleotide sequence ID" value="NC_008380.1"/>
</dbReference>
<dbReference type="SMR" id="Q1MC25"/>
<dbReference type="EnsemblBacteria" id="CAK09507">
    <property type="protein sequence ID" value="CAK09507"/>
    <property type="gene ID" value="RL4017"/>
</dbReference>
<dbReference type="GeneID" id="84671637"/>
<dbReference type="KEGG" id="rle:RL4017"/>
<dbReference type="eggNOG" id="COG0254">
    <property type="taxonomic scope" value="Bacteria"/>
</dbReference>
<dbReference type="HOGENOM" id="CLU_114306_3_2_5"/>
<dbReference type="Proteomes" id="UP000006575">
    <property type="component" value="Chromosome"/>
</dbReference>
<dbReference type="GO" id="GO:1990904">
    <property type="term" value="C:ribonucleoprotein complex"/>
    <property type="evidence" value="ECO:0007669"/>
    <property type="project" value="UniProtKB-KW"/>
</dbReference>
<dbReference type="GO" id="GO:0005840">
    <property type="term" value="C:ribosome"/>
    <property type="evidence" value="ECO:0007669"/>
    <property type="project" value="UniProtKB-KW"/>
</dbReference>
<dbReference type="GO" id="GO:0019843">
    <property type="term" value="F:rRNA binding"/>
    <property type="evidence" value="ECO:0007669"/>
    <property type="project" value="UniProtKB-KW"/>
</dbReference>
<dbReference type="GO" id="GO:0003735">
    <property type="term" value="F:structural constituent of ribosome"/>
    <property type="evidence" value="ECO:0007669"/>
    <property type="project" value="InterPro"/>
</dbReference>
<dbReference type="GO" id="GO:0006412">
    <property type="term" value="P:translation"/>
    <property type="evidence" value="ECO:0007669"/>
    <property type="project" value="UniProtKB-UniRule"/>
</dbReference>
<dbReference type="Gene3D" id="4.10.830.30">
    <property type="entry name" value="Ribosomal protein L31"/>
    <property type="match status" value="1"/>
</dbReference>
<dbReference type="HAMAP" id="MF_00501">
    <property type="entry name" value="Ribosomal_bL31_1"/>
    <property type="match status" value="1"/>
</dbReference>
<dbReference type="InterPro" id="IPR034704">
    <property type="entry name" value="Ribosomal_bL28/bL31-like_sf"/>
</dbReference>
<dbReference type="InterPro" id="IPR002150">
    <property type="entry name" value="Ribosomal_bL31"/>
</dbReference>
<dbReference type="InterPro" id="IPR027491">
    <property type="entry name" value="Ribosomal_bL31_A"/>
</dbReference>
<dbReference type="InterPro" id="IPR042105">
    <property type="entry name" value="Ribosomal_bL31_sf"/>
</dbReference>
<dbReference type="NCBIfam" id="TIGR00105">
    <property type="entry name" value="L31"/>
    <property type="match status" value="1"/>
</dbReference>
<dbReference type="NCBIfam" id="NF001809">
    <property type="entry name" value="PRK00528.1"/>
    <property type="match status" value="1"/>
</dbReference>
<dbReference type="PANTHER" id="PTHR33280">
    <property type="entry name" value="50S RIBOSOMAL PROTEIN L31, CHLOROPLASTIC"/>
    <property type="match status" value="1"/>
</dbReference>
<dbReference type="PANTHER" id="PTHR33280:SF6">
    <property type="entry name" value="LARGE RIBOSOMAL SUBUNIT PROTEIN BL31A"/>
    <property type="match status" value="1"/>
</dbReference>
<dbReference type="Pfam" id="PF01197">
    <property type="entry name" value="Ribosomal_L31"/>
    <property type="match status" value="1"/>
</dbReference>
<dbReference type="PRINTS" id="PR01249">
    <property type="entry name" value="RIBOSOMALL31"/>
</dbReference>
<dbReference type="SUPFAM" id="SSF143800">
    <property type="entry name" value="L28p-like"/>
    <property type="match status" value="1"/>
</dbReference>
<dbReference type="PROSITE" id="PS01143">
    <property type="entry name" value="RIBOSOMAL_L31"/>
    <property type="match status" value="1"/>
</dbReference>
<gene>
    <name evidence="1" type="primary">rpmE</name>
    <name type="ordered locus">RL4017</name>
</gene>
<evidence type="ECO:0000255" key="1">
    <source>
        <dbReference type="HAMAP-Rule" id="MF_00501"/>
    </source>
</evidence>
<evidence type="ECO:0000305" key="2"/>
<sequence length="73" mass="8098">MKAGIHPEYHMIKVVMTDGTEYETRSTWGSEGAVMNLEIDSKSHPAWTGGNQQLMDRGGRVSKFNKRFGGLGL</sequence>
<comment type="function">
    <text evidence="1">Binds the 23S rRNA.</text>
</comment>
<comment type="subunit">
    <text evidence="1">Part of the 50S ribosomal subunit.</text>
</comment>
<comment type="similarity">
    <text evidence="1">Belongs to the bacterial ribosomal protein bL31 family. Type A subfamily.</text>
</comment>
<accession>Q1MC25</accession>
<proteinExistence type="inferred from homology"/>
<name>RL31_RHIJ3</name>
<protein>
    <recommendedName>
        <fullName evidence="1">Large ribosomal subunit protein bL31</fullName>
    </recommendedName>
    <alternativeName>
        <fullName evidence="2">50S ribosomal protein L31</fullName>
    </alternativeName>
</protein>